<accession>Q9Z127</accession>
<accession>Q8R0X8</accession>
<accession>Q9JMI4</accession>
<gene>
    <name type="primary">Slc7a5</name>
    <name type="synonym">Lat1</name>
</gene>
<comment type="function">
    <text evidence="1 2 5 7">The heterodimer with SLC3A2 functions as a sodium-independent, high-affinity transporter that mediates uptake of large neutral amino acids such as phenylalanine, tyrosine, histidine, met hionine, tryptophan, valine, isoleucine and alanine (By similarity). The heterodimer with SLC3A2 mediates the uptake of L-DOPA and leucine (PubMed:11011012, PubMed:9915839). Functions as an amino acid exchanger (By similarity). May play a role in the transport of L-DOPA across the blood-brain barrier (PubMed:11011012). May act as the major transporter of tyrosine in fibroblasts (By similarity). May mediate blood-to-retina L-leucine transport across the inner blood-retinal barrier (By similarity). Can mediate the transport of thyroid hormones diiodothyronine (T2), triiodothyronine (T3) and thyroxine (T4) across the cell membrane. When associated with LAPTM4B, the heterodimer formed by SLC3A2 and SLC7A5 is recruited to lysosomes to promote leucine uptake into these organelles, and thereby mediates mTORC1 activation. Involved in the uptake of toxic methylmercury (MeHg) when administered as the L-cysteine or D,L-homocysteine complexes. Involved in the cellular activity of small molecular weight nitrosothiols, via the stereoselective transport of L-nitrosocysteine (L-CNSO) across the membrane (By similarity).</text>
</comment>
<comment type="catalytic activity">
    <reaction evidence="1">
        <text>L-phenylalanine(in) = L-phenylalanine(out)</text>
        <dbReference type="Rhea" id="RHEA:27950"/>
        <dbReference type="ChEBI" id="CHEBI:58095"/>
    </reaction>
    <physiologicalReaction direction="right-to-left" evidence="1">
        <dbReference type="Rhea" id="RHEA:27952"/>
    </physiologicalReaction>
</comment>
<comment type="catalytic activity">
    <reaction evidence="1">
        <text>L-tryptophan(in) = L-tryptophan(out)</text>
        <dbReference type="Rhea" id="RHEA:70947"/>
        <dbReference type="ChEBI" id="CHEBI:57912"/>
    </reaction>
    <physiologicalReaction direction="right-to-left" evidence="1">
        <dbReference type="Rhea" id="RHEA:70949"/>
    </physiologicalReaction>
</comment>
<comment type="catalytic activity">
    <reaction evidence="1">
        <text>L-histidine(out) = L-histidine(in)</text>
        <dbReference type="Rhea" id="RHEA:72807"/>
        <dbReference type="ChEBI" id="CHEBI:57595"/>
    </reaction>
</comment>
<comment type="catalytic activity">
    <reaction evidence="7">
        <text>L-leucine(in) = L-leucine(out)</text>
        <dbReference type="Rhea" id="RHEA:73011"/>
        <dbReference type="ChEBI" id="CHEBI:57427"/>
    </reaction>
    <physiologicalReaction direction="right-to-left" evidence="11">
        <dbReference type="Rhea" id="RHEA:73013"/>
    </physiologicalReaction>
</comment>
<comment type="catalytic activity">
    <reaction evidence="1">
        <text>L-isoleucine(in) = L-isoleucine(out)</text>
        <dbReference type="Rhea" id="RHEA:70943"/>
        <dbReference type="ChEBI" id="CHEBI:58045"/>
    </reaction>
    <physiologicalReaction direction="right-to-left" evidence="1">
        <dbReference type="Rhea" id="RHEA:70945"/>
    </physiologicalReaction>
</comment>
<comment type="catalytic activity">
    <reaction evidence="1">
        <text>L-valine(in) = L-valine(out)</text>
        <dbReference type="Rhea" id="RHEA:29703"/>
        <dbReference type="ChEBI" id="CHEBI:57762"/>
    </reaction>
    <physiologicalReaction direction="right-to-left" evidence="1">
        <dbReference type="Rhea" id="RHEA:29705"/>
    </physiologicalReaction>
</comment>
<comment type="catalytic activity">
    <reaction evidence="1">
        <text>L-tyrosine(in) = L-tyrosine(out)</text>
        <dbReference type="Rhea" id="RHEA:68572"/>
        <dbReference type="ChEBI" id="CHEBI:58315"/>
    </reaction>
    <physiologicalReaction direction="right-to-left" evidence="1">
        <dbReference type="Rhea" id="RHEA:68574"/>
    </physiologicalReaction>
</comment>
<comment type="catalytic activity">
    <reaction evidence="1">
        <text>L-methionine(in) = L-methionine(out)</text>
        <dbReference type="Rhea" id="RHEA:70939"/>
        <dbReference type="ChEBI" id="CHEBI:57844"/>
    </reaction>
    <physiologicalReaction direction="right-to-left" evidence="1">
        <dbReference type="Rhea" id="RHEA:70941"/>
    </physiologicalReaction>
</comment>
<comment type="catalytic activity">
    <reaction evidence="1">
        <text>L-alanine(in) = L-alanine(out)</text>
        <dbReference type="Rhea" id="RHEA:70719"/>
        <dbReference type="ChEBI" id="CHEBI:57972"/>
    </reaction>
    <physiologicalReaction direction="right-to-left" evidence="1">
        <dbReference type="Rhea" id="RHEA:70721"/>
    </physiologicalReaction>
</comment>
<comment type="catalytic activity">
    <reaction evidence="1">
        <text>3,3'-diiodo-L-thyronine(out) = 3,3'-diiodo-L-thyronine(in)</text>
        <dbReference type="Rhea" id="RHEA:71823"/>
        <dbReference type="ChEBI" id="CHEBI:176514"/>
    </reaction>
</comment>
<comment type="catalytic activity">
    <reaction evidence="1">
        <text>3,3',5-triiodo-L-thyronine(out) = 3,3',5-triiodo-L-thyronine(in)</text>
        <dbReference type="Rhea" id="RHEA:71811"/>
        <dbReference type="ChEBI" id="CHEBI:533015"/>
    </reaction>
</comment>
<comment type="catalytic activity">
    <reaction evidence="1">
        <text>L-thyroxine(out) = L-thyroxine(in)</text>
        <dbReference type="Rhea" id="RHEA:71819"/>
        <dbReference type="ChEBI" id="CHEBI:58448"/>
    </reaction>
</comment>
<comment type="activity regulation">
    <text evidence="7">Leucine uptake was inhibited by ileum, valine histidine and phenylalanine as well as by 2-amino-bicyclo-(2,2,1)-heptane-2-carboxylate (BCH) (a specific inhibitor of system L transport).</text>
</comment>
<comment type="biophysicochemical properties">
    <kinetics>
        <KM evidence="7">25 uM for leucine</KM>
    </kinetics>
</comment>
<comment type="subunit">
    <text evidence="1 5 7">Disulfide-linked heterodimer with the amino acid transport protein SLC3A2/4F2hc (PubMed:11011012, PubMed:9915839). Interacts with LAPTM4B; this recruits the heterodimer formed by SLC3A2 and SLC7A5 to lysosomes to promote leucine uptake into these organelles and is required for mTORC1 activation (By similarity).</text>
</comment>
<comment type="subcellular location">
    <subcellularLocation>
        <location evidence="1">Apical cell membrane</location>
        <topology evidence="1">Multi-pass membrane protein</topology>
    </subcellularLocation>
    <subcellularLocation>
        <location evidence="7">Cell membrane</location>
        <topology evidence="1">Multi-pass membrane protein</topology>
    </subcellularLocation>
    <subcellularLocation>
        <location evidence="1">Lysosome membrane</location>
        <topology evidence="1">Multi-pass membrane protein</topology>
    </subcellularLocation>
    <text evidence="1 2 7">Located to the plasma membrane by SLC3A2/4F2hc (PubMed:9915839). Localized to the apical membrane of placental syncytiotrophoblastic cells. Recruited to lysosomes by LAPTM4B (By similarity). Expressed in both luminal and abluminal membranes of brain capillary endothelial cells (By similarity).</text>
</comment>
<comment type="tissue specificity">
    <text evidence="4 5 6 7">Detected in brain, spleen, liver and testis (at protein level) (PubMed:9915839). Predominantly expressed in the microvessels in the brain parenchyma of the central nervous system. Also detected in the subfornical organ, the subcommissural organ, ventromedial nucleus of the hypothalamus, subgranular zone of the dentate gyrus in hippocampus, ependymal layer of the lateral ventricles, and the olfactory bulb. Very strong expression also seen in testis, ovary, and placenta with weaker expression in spleen, skin, brain, thymus, stomach, lung, heart, kidney, small intestine, uterus and skeletal muscle.</text>
</comment>
<comment type="developmental stage">
    <text evidence="7">Strong expression in the liver of 14 dpc embryo. In embryo of 18 dpc expressed strongly in brain, moderate expression in spleen and brain and weak expression in liver.</text>
</comment>
<comment type="induction">
    <text evidence="7">Expression induced by concanavalin-A stimulation.</text>
</comment>
<comment type="similarity">
    <text evidence="10">Belongs to the amino acid-polyamine-organocation (APC) superfamily. L-type amino acid transporter (LAT) (TC 2.A.3.8) family.</text>
</comment>
<name>LAT1_MOUSE</name>
<organism>
    <name type="scientific">Mus musculus</name>
    <name type="common">Mouse</name>
    <dbReference type="NCBI Taxonomy" id="10090"/>
    <lineage>
        <taxon>Eukaryota</taxon>
        <taxon>Metazoa</taxon>
        <taxon>Chordata</taxon>
        <taxon>Craniata</taxon>
        <taxon>Vertebrata</taxon>
        <taxon>Euteleostomi</taxon>
        <taxon>Mammalia</taxon>
        <taxon>Eutheria</taxon>
        <taxon>Euarchontoglires</taxon>
        <taxon>Glires</taxon>
        <taxon>Rodentia</taxon>
        <taxon>Myomorpha</taxon>
        <taxon>Muroidea</taxon>
        <taxon>Muridae</taxon>
        <taxon>Murinae</taxon>
        <taxon>Mus</taxon>
        <taxon>Mus</taxon>
    </lineage>
</organism>
<proteinExistence type="evidence at protein level"/>
<protein>
    <recommendedName>
        <fullName>Large neutral amino acids transporter small subunit 1</fullName>
    </recommendedName>
    <alternativeName>
        <fullName evidence="9">4F2 light chain</fullName>
        <shortName>4F2 LC</shortName>
        <shortName evidence="9">4F2LC</shortName>
    </alternativeName>
    <alternativeName>
        <fullName evidence="9">L-type amino acid transporter 1</fullName>
        <shortName evidence="8">LAT1</shortName>
    </alternativeName>
    <alternativeName>
        <fullName>Solute carrier family 7 member 5</fullName>
    </alternativeName>
</protein>
<keyword id="KW-0029">Amino-acid transport</keyword>
<keyword id="KW-1003">Cell membrane</keyword>
<keyword id="KW-1015">Disulfide bond</keyword>
<keyword id="KW-0458">Lysosome</keyword>
<keyword id="KW-0472">Membrane</keyword>
<keyword id="KW-0597">Phosphoprotein</keyword>
<keyword id="KW-1185">Reference proteome</keyword>
<keyword id="KW-0812">Transmembrane</keyword>
<keyword id="KW-1133">Transmembrane helix</keyword>
<keyword id="KW-0813">Transport</keyword>
<dbReference type="EMBL" id="AB017189">
    <property type="protein sequence ID" value="BAA75520.1"/>
    <property type="molecule type" value="mRNA"/>
</dbReference>
<dbReference type="EMBL" id="AB023409">
    <property type="protein sequence ID" value="BAA90556.1"/>
    <property type="molecule type" value="mRNA"/>
</dbReference>
<dbReference type="EMBL" id="BC026131">
    <property type="protein sequence ID" value="AAH26131.1"/>
    <property type="molecule type" value="mRNA"/>
</dbReference>
<dbReference type="CCDS" id="CCDS22730.1"/>
<dbReference type="RefSeq" id="NP_035534.2">
    <property type="nucleotide sequence ID" value="NM_011404.3"/>
</dbReference>
<dbReference type="SMR" id="Q9Z127"/>
<dbReference type="BioGRID" id="203318">
    <property type="interactions" value="45"/>
</dbReference>
<dbReference type="FunCoup" id="Q9Z127">
    <property type="interactions" value="433"/>
</dbReference>
<dbReference type="STRING" id="10090.ENSMUSP00000041557"/>
<dbReference type="ChEMBL" id="CHEMBL4523516"/>
<dbReference type="GlyGen" id="Q9Z127">
    <property type="glycosylation" value="2 sites, 1 O-linked glycan (1 site)"/>
</dbReference>
<dbReference type="iPTMnet" id="Q9Z127"/>
<dbReference type="PhosphoSitePlus" id="Q9Z127"/>
<dbReference type="SwissPalm" id="Q9Z127"/>
<dbReference type="PaxDb" id="10090-ENSMUSP00000041557"/>
<dbReference type="ProteomicsDB" id="265046"/>
<dbReference type="Pumba" id="Q9Z127"/>
<dbReference type="Antibodypedia" id="17241">
    <property type="antibodies" value="405 antibodies from 37 providers"/>
</dbReference>
<dbReference type="DNASU" id="20539"/>
<dbReference type="Ensembl" id="ENSMUST00000045557.10">
    <property type="protein sequence ID" value="ENSMUSP00000041557.9"/>
    <property type="gene ID" value="ENSMUSG00000040010.11"/>
</dbReference>
<dbReference type="GeneID" id="20539"/>
<dbReference type="KEGG" id="mmu:20539"/>
<dbReference type="UCSC" id="uc009nsc.2">
    <property type="organism name" value="mouse"/>
</dbReference>
<dbReference type="AGR" id="MGI:1298205"/>
<dbReference type="CTD" id="8140"/>
<dbReference type="MGI" id="MGI:1298205">
    <property type="gene designation" value="Slc7a5"/>
</dbReference>
<dbReference type="VEuPathDB" id="HostDB:ENSMUSG00000040010"/>
<dbReference type="eggNOG" id="KOG1287">
    <property type="taxonomic scope" value="Eukaryota"/>
</dbReference>
<dbReference type="GeneTree" id="ENSGT00940000155581"/>
<dbReference type="HOGENOM" id="CLU_007946_3_0_1"/>
<dbReference type="InParanoid" id="Q9Z127"/>
<dbReference type="OMA" id="AWCQKVM"/>
<dbReference type="OrthoDB" id="10062876at2759"/>
<dbReference type="PhylomeDB" id="Q9Z127"/>
<dbReference type="TreeFam" id="TF313355"/>
<dbReference type="Reactome" id="R-MMU-210991">
    <property type="pathway name" value="Basigin interactions"/>
</dbReference>
<dbReference type="Reactome" id="R-MMU-352230">
    <property type="pathway name" value="Amino acid transport across the plasma membrane"/>
</dbReference>
<dbReference type="Reactome" id="R-MMU-71240">
    <property type="pathway name" value="Tryptophan catabolism"/>
</dbReference>
<dbReference type="BioGRID-ORCS" id="20539">
    <property type="hits" value="18 hits in 78 CRISPR screens"/>
</dbReference>
<dbReference type="ChiTaRS" id="Slc7a5">
    <property type="organism name" value="mouse"/>
</dbReference>
<dbReference type="PRO" id="PR:Q9Z127"/>
<dbReference type="Proteomes" id="UP000000589">
    <property type="component" value="Chromosome 8"/>
</dbReference>
<dbReference type="RNAct" id="Q9Z127">
    <property type="molecule type" value="protein"/>
</dbReference>
<dbReference type="Bgee" id="ENSMUSG00000040010">
    <property type="expression patterns" value="Expressed in lacrimal gland and 259 other cell types or tissues"/>
</dbReference>
<dbReference type="GO" id="GO:1990184">
    <property type="term" value="C:amino acid transport complex"/>
    <property type="evidence" value="ECO:0000250"/>
    <property type="project" value="UniProtKB"/>
</dbReference>
<dbReference type="GO" id="GO:0016324">
    <property type="term" value="C:apical plasma membrane"/>
    <property type="evidence" value="ECO:0000250"/>
    <property type="project" value="UniProtKB"/>
</dbReference>
<dbReference type="GO" id="GO:0016323">
    <property type="term" value="C:basolateral plasma membrane"/>
    <property type="evidence" value="ECO:0007669"/>
    <property type="project" value="Ensembl"/>
</dbReference>
<dbReference type="GO" id="GO:0005829">
    <property type="term" value="C:cytosol"/>
    <property type="evidence" value="ECO:0007669"/>
    <property type="project" value="Ensembl"/>
</dbReference>
<dbReference type="GO" id="GO:0098591">
    <property type="term" value="C:external side of apical plasma membrane"/>
    <property type="evidence" value="ECO:0007669"/>
    <property type="project" value="Ensembl"/>
</dbReference>
<dbReference type="GO" id="GO:0005765">
    <property type="term" value="C:lysosomal membrane"/>
    <property type="evidence" value="ECO:0007669"/>
    <property type="project" value="UniProtKB-SubCell"/>
</dbReference>
<dbReference type="GO" id="GO:0016020">
    <property type="term" value="C:membrane"/>
    <property type="evidence" value="ECO:0000250"/>
    <property type="project" value="UniProtKB"/>
</dbReference>
<dbReference type="GO" id="GO:0031528">
    <property type="term" value="C:microvillus membrane"/>
    <property type="evidence" value="ECO:0007669"/>
    <property type="project" value="Ensembl"/>
</dbReference>
<dbReference type="GO" id="GO:0005886">
    <property type="term" value="C:plasma membrane"/>
    <property type="evidence" value="ECO:0000314"/>
    <property type="project" value="UniProtKB"/>
</dbReference>
<dbReference type="GO" id="GO:0015297">
    <property type="term" value="F:antiporter activity"/>
    <property type="evidence" value="ECO:0000250"/>
    <property type="project" value="UniProtKB"/>
</dbReference>
<dbReference type="GO" id="GO:0015179">
    <property type="term" value="F:L-amino acid transmembrane transporter activity"/>
    <property type="evidence" value="ECO:0000314"/>
    <property type="project" value="MGI"/>
</dbReference>
<dbReference type="GO" id="GO:0015190">
    <property type="term" value="F:L-leucine transmembrane transporter activity"/>
    <property type="evidence" value="ECO:0000250"/>
    <property type="project" value="UniProtKB"/>
</dbReference>
<dbReference type="GO" id="GO:0015196">
    <property type="term" value="F:L-tryptophan transmembrane transporter activity"/>
    <property type="evidence" value="ECO:0000250"/>
    <property type="project" value="UniProtKB"/>
</dbReference>
<dbReference type="GO" id="GO:0015349">
    <property type="term" value="F:thyroid hormone transmembrane transporter activity"/>
    <property type="evidence" value="ECO:0007669"/>
    <property type="project" value="Ensembl"/>
</dbReference>
<dbReference type="GO" id="GO:0032328">
    <property type="term" value="P:alanine transport"/>
    <property type="evidence" value="ECO:0007669"/>
    <property type="project" value="Ensembl"/>
</dbReference>
<dbReference type="GO" id="GO:0042149">
    <property type="term" value="P:cellular response to glucose starvation"/>
    <property type="evidence" value="ECO:0007669"/>
    <property type="project" value="Ensembl"/>
</dbReference>
<dbReference type="GO" id="GO:1903577">
    <property type="term" value="P:cellular response to L-arginine"/>
    <property type="evidence" value="ECO:0007669"/>
    <property type="project" value="Ensembl"/>
</dbReference>
<dbReference type="GO" id="GO:0071222">
    <property type="term" value="P:cellular response to lipopolysaccharide"/>
    <property type="evidence" value="ECO:0007669"/>
    <property type="project" value="Ensembl"/>
</dbReference>
<dbReference type="GO" id="GO:0015818">
    <property type="term" value="P:isoleucine transport"/>
    <property type="evidence" value="ECO:0007669"/>
    <property type="project" value="Ensembl"/>
</dbReference>
<dbReference type="GO" id="GO:0015807">
    <property type="term" value="P:L-amino acid transport"/>
    <property type="evidence" value="ECO:0000314"/>
    <property type="project" value="MGI"/>
</dbReference>
<dbReference type="GO" id="GO:1902024">
    <property type="term" value="P:L-histidine transport"/>
    <property type="evidence" value="ECO:0007669"/>
    <property type="project" value="Ensembl"/>
</dbReference>
<dbReference type="GO" id="GO:1903801">
    <property type="term" value="P:L-leucine import across plasma membrane"/>
    <property type="evidence" value="ECO:0007669"/>
    <property type="project" value="Ensembl"/>
</dbReference>
<dbReference type="GO" id="GO:0015820">
    <property type="term" value="P:L-leucine transport"/>
    <property type="evidence" value="ECO:0000314"/>
    <property type="project" value="UniProtKB"/>
</dbReference>
<dbReference type="GO" id="GO:1904556">
    <property type="term" value="P:L-tryptophan transmembrane transport"/>
    <property type="evidence" value="ECO:0000250"/>
    <property type="project" value="UniProtKB"/>
</dbReference>
<dbReference type="GO" id="GO:0097421">
    <property type="term" value="P:liver regeneration"/>
    <property type="evidence" value="ECO:0007669"/>
    <property type="project" value="Ensembl"/>
</dbReference>
<dbReference type="GO" id="GO:0015821">
    <property type="term" value="P:methionine transport"/>
    <property type="evidence" value="ECO:0007669"/>
    <property type="project" value="Ensembl"/>
</dbReference>
<dbReference type="GO" id="GO:0010507">
    <property type="term" value="P:negative regulation of autophagy"/>
    <property type="evidence" value="ECO:0007669"/>
    <property type="project" value="Ensembl"/>
</dbReference>
<dbReference type="GO" id="GO:0010629">
    <property type="term" value="P:negative regulation of gene expression"/>
    <property type="evidence" value="ECO:0007669"/>
    <property type="project" value="Ensembl"/>
</dbReference>
<dbReference type="GO" id="GO:1905460">
    <property type="term" value="P:negative regulation of vascular associated smooth muscle cell apoptotic process"/>
    <property type="evidence" value="ECO:0007669"/>
    <property type="project" value="Ensembl"/>
</dbReference>
<dbReference type="GO" id="GO:0015823">
    <property type="term" value="P:phenylalanine transport"/>
    <property type="evidence" value="ECO:0007669"/>
    <property type="project" value="Ensembl"/>
</dbReference>
<dbReference type="GO" id="GO:0060252">
    <property type="term" value="P:positive regulation of glial cell proliferation"/>
    <property type="evidence" value="ECO:0007669"/>
    <property type="project" value="Ensembl"/>
</dbReference>
<dbReference type="GO" id="GO:0032740">
    <property type="term" value="P:positive regulation of interleukin-17 production"/>
    <property type="evidence" value="ECO:0007669"/>
    <property type="project" value="Ensembl"/>
</dbReference>
<dbReference type="GO" id="GO:0032753">
    <property type="term" value="P:positive regulation of interleukin-4 production"/>
    <property type="evidence" value="ECO:0007669"/>
    <property type="project" value="Ensembl"/>
</dbReference>
<dbReference type="GO" id="GO:1905534">
    <property type="term" value="P:positive regulation of L-leucine import across plasma membrane"/>
    <property type="evidence" value="ECO:0007669"/>
    <property type="project" value="Ensembl"/>
</dbReference>
<dbReference type="GO" id="GO:0032729">
    <property type="term" value="P:positive regulation of type II interferon production"/>
    <property type="evidence" value="ECO:0007669"/>
    <property type="project" value="Ensembl"/>
</dbReference>
<dbReference type="GO" id="GO:0015824">
    <property type="term" value="P:proline transport"/>
    <property type="evidence" value="ECO:0007669"/>
    <property type="project" value="Ensembl"/>
</dbReference>
<dbReference type="GO" id="GO:0055093">
    <property type="term" value="P:response to hyperoxia"/>
    <property type="evidence" value="ECO:0007669"/>
    <property type="project" value="Ensembl"/>
</dbReference>
<dbReference type="GO" id="GO:0014850">
    <property type="term" value="P:response to muscle activity"/>
    <property type="evidence" value="ECO:0007669"/>
    <property type="project" value="Ensembl"/>
</dbReference>
<dbReference type="GO" id="GO:0015828">
    <property type="term" value="P:tyrosine transport"/>
    <property type="evidence" value="ECO:0007669"/>
    <property type="project" value="Ensembl"/>
</dbReference>
<dbReference type="GO" id="GO:0015829">
    <property type="term" value="P:valine transport"/>
    <property type="evidence" value="ECO:0007669"/>
    <property type="project" value="Ensembl"/>
</dbReference>
<dbReference type="GO" id="GO:0042908">
    <property type="term" value="P:xenobiotic transport"/>
    <property type="evidence" value="ECO:0007669"/>
    <property type="project" value="Ensembl"/>
</dbReference>
<dbReference type="FunFam" id="1.20.1740.10:FF:000003">
    <property type="entry name" value="Y+L amino acid transporter 1 isoform X1"/>
    <property type="match status" value="1"/>
</dbReference>
<dbReference type="Gene3D" id="1.20.1740.10">
    <property type="entry name" value="Amino acid/polyamine transporter I"/>
    <property type="match status" value="1"/>
</dbReference>
<dbReference type="InterPro" id="IPR002293">
    <property type="entry name" value="AA/rel_permease1"/>
</dbReference>
<dbReference type="InterPro" id="IPR050598">
    <property type="entry name" value="AminoAcid_Transporter"/>
</dbReference>
<dbReference type="InterPro" id="IPR004760">
    <property type="entry name" value="L_AA_transporter"/>
</dbReference>
<dbReference type="NCBIfam" id="TIGR00911">
    <property type="entry name" value="2A0308"/>
    <property type="match status" value="1"/>
</dbReference>
<dbReference type="PANTHER" id="PTHR11785">
    <property type="entry name" value="AMINO ACID TRANSPORTER"/>
    <property type="match status" value="1"/>
</dbReference>
<dbReference type="PANTHER" id="PTHR11785:SF315">
    <property type="entry name" value="LARGE NEUTRAL AMINO ACIDS TRANSPORTER SMALL SUBUNIT 1"/>
    <property type="match status" value="1"/>
</dbReference>
<dbReference type="Pfam" id="PF13520">
    <property type="entry name" value="AA_permease_2"/>
    <property type="match status" value="1"/>
</dbReference>
<dbReference type="PIRSF" id="PIRSF006060">
    <property type="entry name" value="AA_transporter"/>
    <property type="match status" value="1"/>
</dbReference>
<evidence type="ECO:0000250" key="1">
    <source>
        <dbReference type="UniProtKB" id="Q01650"/>
    </source>
</evidence>
<evidence type="ECO:0000250" key="2">
    <source>
        <dbReference type="UniProtKB" id="Q63016"/>
    </source>
</evidence>
<evidence type="ECO:0000256" key="3">
    <source>
        <dbReference type="SAM" id="MobiDB-lite"/>
    </source>
</evidence>
<evidence type="ECO:0000269" key="4">
    <source>
    </source>
</evidence>
<evidence type="ECO:0000269" key="5">
    <source>
    </source>
</evidence>
<evidence type="ECO:0000269" key="6">
    <source>
    </source>
</evidence>
<evidence type="ECO:0000269" key="7">
    <source>
    </source>
</evidence>
<evidence type="ECO:0000303" key="8">
    <source>
    </source>
</evidence>
<evidence type="ECO:0000303" key="9">
    <source>
    </source>
</evidence>
<evidence type="ECO:0000305" key="10"/>
<evidence type="ECO:0000305" key="11">
    <source>
    </source>
</evidence>
<feature type="chain" id="PRO_0000054271" description="Large neutral amino acids transporter small subunit 1">
    <location>
        <begin position="1"/>
        <end position="512"/>
    </location>
</feature>
<feature type="topological domain" description="Cytoplasmic" evidence="10">
    <location>
        <begin position="1"/>
        <end position="50"/>
    </location>
</feature>
<feature type="transmembrane region" description="Helical" evidence="1">
    <location>
        <begin position="51"/>
        <end position="71"/>
    </location>
</feature>
<feature type="topological domain" description="Extracellular" evidence="10">
    <location>
        <begin position="72"/>
        <end position="84"/>
    </location>
</feature>
<feature type="transmembrane region" description="Helical" evidence="1">
    <location>
        <begin position="85"/>
        <end position="105"/>
    </location>
</feature>
<feature type="topological domain" description="Cytoplasmic" evidence="10">
    <location>
        <begin position="106"/>
        <end position="127"/>
    </location>
</feature>
<feature type="transmembrane region" description="Helical" evidence="1">
    <location>
        <begin position="128"/>
        <end position="148"/>
    </location>
</feature>
<feature type="topological domain" description="Extracellular" evidence="10">
    <location>
        <begin position="149"/>
        <end position="170"/>
    </location>
</feature>
<feature type="transmembrane region" description="Helical" evidence="1">
    <location>
        <begin position="171"/>
        <end position="191"/>
    </location>
</feature>
<feature type="topological domain" description="Cytoplasmic" evidence="10">
    <location>
        <begin position="192"/>
        <end position="193"/>
    </location>
</feature>
<feature type="transmembrane region" description="Helical" evidence="1">
    <location>
        <begin position="194"/>
        <end position="215"/>
    </location>
</feature>
<feature type="topological domain" description="Extracellular" evidence="10">
    <location>
        <begin position="216"/>
        <end position="247"/>
    </location>
</feature>
<feature type="transmembrane region" description="Helical" evidence="1">
    <location>
        <begin position="248"/>
        <end position="268"/>
    </location>
</feature>
<feature type="topological domain" description="Cytoplasmic" evidence="10">
    <location>
        <begin position="269"/>
        <end position="281"/>
    </location>
</feature>
<feature type="transmembrane region" description="Helical" evidence="1">
    <location>
        <begin position="282"/>
        <end position="302"/>
    </location>
</feature>
<feature type="topological domain" description="Extracellular" evidence="10">
    <location>
        <begin position="303"/>
        <end position="329"/>
    </location>
</feature>
<feature type="transmembrane region" description="Helical" evidence="1">
    <location>
        <begin position="330"/>
        <end position="350"/>
    </location>
</feature>
<feature type="topological domain" description="Cytoplasmic" evidence="10">
    <location>
        <begin position="351"/>
        <end position="374"/>
    </location>
</feature>
<feature type="transmembrane region" description="Helical" evidence="1">
    <location>
        <begin position="375"/>
        <end position="395"/>
    </location>
</feature>
<feature type="topological domain" description="Extracellular" evidence="10">
    <location>
        <begin position="396"/>
        <end position="400"/>
    </location>
</feature>
<feature type="transmembrane region" description="Helical" evidence="1">
    <location>
        <begin position="401"/>
        <end position="421"/>
    </location>
</feature>
<feature type="topological domain" description="Cytoplasmic" evidence="10">
    <location>
        <begin position="422"/>
        <end position="435"/>
    </location>
</feature>
<feature type="transmembrane region" description="Helical" evidence="1">
    <location>
        <begin position="436"/>
        <end position="456"/>
    </location>
</feature>
<feature type="topological domain" description="Extracellular" evidence="10">
    <location>
        <begin position="457"/>
        <end position="462"/>
    </location>
</feature>
<feature type="transmembrane region" description="Helical" evidence="1">
    <location>
        <begin position="463"/>
        <end position="483"/>
    </location>
</feature>
<feature type="topological domain" description="Cytoplasmic" evidence="10">
    <location>
        <begin position="484"/>
        <end position="512"/>
    </location>
</feature>
<feature type="region of interest" description="Disordered" evidence="3">
    <location>
        <begin position="1"/>
        <end position="43"/>
    </location>
</feature>
<feature type="compositionally biased region" description="Basic residues" evidence="3">
    <location>
        <begin position="1"/>
        <end position="10"/>
    </location>
</feature>
<feature type="compositionally biased region" description="Basic and acidic residues" evidence="3">
    <location>
        <begin position="20"/>
        <end position="37"/>
    </location>
</feature>
<feature type="modified residue" description="Phosphothreonine" evidence="1">
    <location>
        <position position="46"/>
    </location>
</feature>
<feature type="disulfide bond" description="Interchain (with C-210 in SLC3A2)" evidence="1">
    <location>
        <position position="165"/>
    </location>
</feature>
<feature type="sequence conflict" description="In Ref. 2; BAA90556." evidence="10" ref="2">
    <original>R</original>
    <variation>M</variation>
    <location>
        <position position="8"/>
    </location>
</feature>
<feature type="sequence conflict" description="In Ref. 1; BAA75520 and 2; BAA90556." evidence="10" ref="1 2">
    <original>A</original>
    <variation>T</variation>
    <location>
        <position position="16"/>
    </location>
</feature>
<sequence length="512" mass="55872">MAVAGAKRRAVATPAAAAAEEERQAREKMLEARRGDGADPEGEGVTLQRNITLLNGVAIIVGTIIGSGIFVTPTGVLKEAGSPGLSLVVWAVCGVFSIVGALCYAELGTTISKSGGDYAYMLEVYGSLPAFLKLWIELLIIRPSSQYIVALVFATYLLKPVFPTCPVPEEAAKLVACLCVLLLTAVNCYSVKAATRVQDAFAAAKLLALALIILLGFIQMGKDMGQGDASNLQQKLSFEGTNLDVGNIVLALYSGLFAYGGWNYLNFVTEEMINPYRNLPLAIIISLPIVTLVYVLTNLAYFTTLSTNQMLTSEAVAVDFGNYHLGVMSWIIPVFVGLSCFGSVNGSLFTSSRLFFVGSREGHLPSVLSMIHPQLLTPVPSLVFTCIMTLMYAFSRDIFSIINFFSFFNWLCVALAIIGMMWLRFKKPELERPIKVNLALPVFFILACLFLIAVSFWKTPMECGIGFAIILSGLPVYFFGVWWKNKPKWILQAIFSVTVLCQKLMQVVPQET</sequence>
<reference key="1">
    <citation type="journal article" date="1999" name="J. Biol. Chem.">
        <title>4F2 (CD98) heavy chain is associated covalently with an amino acid transporter and controls intracellular trafficking and membrane topology of 4F2 heterodimer.</title>
        <authorList>
            <person name="Nakamura E."/>
            <person name="Sato M."/>
            <person name="Yang H."/>
            <person name="Miyagawa F."/>
            <person name="Harasaki M."/>
            <person name="Tomita K."/>
            <person name="Matsuoka S."/>
            <person name="Noma A."/>
            <person name="Iwai K."/>
            <person name="Minato N."/>
        </authorList>
    </citation>
    <scope>NUCLEOTIDE SEQUENCE [MRNA]</scope>
    <scope>FUNCTION</scope>
    <scope>BIOPHYSICOCHEMICAL PROPERTIES</scope>
    <scope>SUBUNIT</scope>
    <scope>SUBCELLULAR LOCATION</scope>
    <scope>TISSUE SPECIFICITY</scope>
    <scope>DEVELOPMENTAL STAGE</scope>
    <scope>INDUCTION</scope>
    <scope>ACTIVITY REGULATION</scope>
    <scope>TRANSPORTER ACTIVITY</scope>
    <source>
        <strain>BALB/cJ</strain>
    </source>
</reference>
<reference key="2">
    <citation type="submission" date="1999-02" db="EMBL/GenBank/DDBJ databases">
        <title>Localization of expression of system L neutral amino acid transporter LAT1 in brain.</title>
        <authorList>
            <person name="Kanai Y."/>
            <person name="Watanabe M."/>
            <person name="Endou H."/>
        </authorList>
    </citation>
    <scope>NUCLEOTIDE SEQUENCE [MRNA]</scope>
    <source>
        <strain>ICR</strain>
    </source>
</reference>
<reference key="3">
    <citation type="journal article" date="2004" name="Genome Res.">
        <title>The status, quality, and expansion of the NIH full-length cDNA project: the Mammalian Gene Collection (MGC).</title>
        <authorList>
            <consortium name="The MGC Project Team"/>
        </authorList>
    </citation>
    <scope>NUCLEOTIDE SEQUENCE [LARGE SCALE MRNA]</scope>
    <source>
        <strain>FVB/N</strain>
        <tissue>Salivary gland</tissue>
    </source>
</reference>
<reference key="4">
    <citation type="journal article" date="1999" name="J. Biol. Chem.">
        <title>LAT2, a new basolateral 4F2hc/CD98-associated amino acid transporter of kidney and intestine.</title>
        <authorList>
            <person name="Rossier G."/>
            <person name="Meier C."/>
            <person name="Bauch C."/>
            <person name="Summa V."/>
            <person name="Sordat B."/>
            <person name="Verrey F."/>
            <person name="Kuehn L.C."/>
        </authorList>
    </citation>
    <scope>TISSUE SPECIFICITY</scope>
</reference>
<reference key="5">
    <citation type="journal article" date="2000" name="Brain Res.">
        <title>The 4F2hc/LAT1 complex transports L-DOPA across the blood-brain barrier.</title>
        <authorList>
            <person name="Kageyama T."/>
            <person name="Nakamura M."/>
            <person name="Matsuo A."/>
            <person name="Yamasaki Y."/>
            <person name="Takakura Y."/>
            <person name="Hashida M."/>
            <person name="Kanai Y."/>
            <person name="Naito M."/>
            <person name="Tsuruo T."/>
            <person name="Minato N."/>
            <person name="Shimohama S."/>
        </authorList>
    </citation>
    <scope>FUNCTION</scope>
    <scope>SUBUNIT</scope>
    <scope>TISSUE SPECIFICITY</scope>
</reference>
<reference key="6">
    <citation type="journal article" date="2000" name="NeuroReport">
        <title>Distribution of the 4F2 light chain, LAT1, in the mouse brain.</title>
        <authorList>
            <person name="Kageyama T."/>
            <person name="Imura T."/>
            <person name="Matsuo A."/>
            <person name="Minato N."/>
            <person name="Shimohama S."/>
        </authorList>
    </citation>
    <scope>TISSUE SPECIFICITY</scope>
</reference>
<reference key="7">
    <citation type="journal article" date="2010" name="Cell">
        <title>A tissue-specific atlas of mouse protein phosphorylation and expression.</title>
        <authorList>
            <person name="Huttlin E.L."/>
            <person name="Jedrychowski M.P."/>
            <person name="Elias J.E."/>
            <person name="Goswami T."/>
            <person name="Rad R."/>
            <person name="Beausoleil S.A."/>
            <person name="Villen J."/>
            <person name="Haas W."/>
            <person name="Sowa M.E."/>
            <person name="Gygi S.P."/>
        </authorList>
    </citation>
    <scope>IDENTIFICATION BY MASS SPECTROMETRY [LARGE SCALE ANALYSIS]</scope>
    <source>
        <tissue>Brain</tissue>
        <tissue>Pancreas</tissue>
        <tissue>Spleen</tissue>
        <tissue>Testis</tissue>
    </source>
</reference>